<protein>
    <recommendedName>
        <fullName evidence="1">N-acetyl-gamma-glutamyl-phosphate reductase</fullName>
        <shortName evidence="1">AGPR</shortName>
        <ecNumber evidence="1">1.2.1.38</ecNumber>
    </recommendedName>
    <alternativeName>
        <fullName evidence="1">N-acetyl-glutamate semialdehyde dehydrogenase</fullName>
        <shortName evidence="1">NAGSA dehydrogenase</shortName>
    </alternativeName>
</protein>
<keyword id="KW-0028">Amino-acid biosynthesis</keyword>
<keyword id="KW-0055">Arginine biosynthesis</keyword>
<keyword id="KW-0963">Cytoplasm</keyword>
<keyword id="KW-0521">NADP</keyword>
<keyword id="KW-0560">Oxidoreductase</keyword>
<keyword id="KW-1185">Reference proteome</keyword>
<evidence type="ECO:0000255" key="1">
    <source>
        <dbReference type="HAMAP-Rule" id="MF_00150"/>
    </source>
</evidence>
<proteinExistence type="inferred from homology"/>
<sequence length="340" mass="37870">MRISIVGITGYSGMELLRILLQHPQAEVVSLHASQDMEAPASELYPHLKGICDLKIEAFDSQEIMRRADLVFFATSSGVAKDLSKDFVEAGFPVIDLSGDHRLPGNIYKKWYQKEPAEDYVQKAFIYGLSEFTDVRGERFIANPGCYATATELALIPLLKARAIELDFIIVDAKSGLTGAGKNPAASSHFVHVHDNYVTYKLNQHQHIPEIVQQLQRFDKRLQQIQFSTSLIPLNRGIVATVYSKLKEPLTREELAAIYQDCYQDKPFVRIQAALPNLHQVVGTNYTDIGFDYNPVTNILTVVAVLDNLIKGAAGQAVQNMNLMLGFPETDGLLSQPSYV</sequence>
<feature type="chain" id="PRO_1000011069" description="N-acetyl-gamma-glutamyl-phosphate reductase">
    <location>
        <begin position="1"/>
        <end position="340"/>
    </location>
</feature>
<feature type="active site" evidence="1">
    <location>
        <position position="146"/>
    </location>
</feature>
<name>ARGC_STRSV</name>
<organism>
    <name type="scientific">Streptococcus sanguinis (strain SK36)</name>
    <dbReference type="NCBI Taxonomy" id="388919"/>
    <lineage>
        <taxon>Bacteria</taxon>
        <taxon>Bacillati</taxon>
        <taxon>Bacillota</taxon>
        <taxon>Bacilli</taxon>
        <taxon>Lactobacillales</taxon>
        <taxon>Streptococcaceae</taxon>
        <taxon>Streptococcus</taxon>
    </lineage>
</organism>
<comment type="function">
    <text evidence="1">Catalyzes the NADPH-dependent reduction of N-acetyl-5-glutamyl phosphate to yield N-acetyl-L-glutamate 5-semialdehyde.</text>
</comment>
<comment type="catalytic activity">
    <reaction evidence="1">
        <text>N-acetyl-L-glutamate 5-semialdehyde + phosphate + NADP(+) = N-acetyl-L-glutamyl 5-phosphate + NADPH + H(+)</text>
        <dbReference type="Rhea" id="RHEA:21588"/>
        <dbReference type="ChEBI" id="CHEBI:15378"/>
        <dbReference type="ChEBI" id="CHEBI:29123"/>
        <dbReference type="ChEBI" id="CHEBI:43474"/>
        <dbReference type="ChEBI" id="CHEBI:57783"/>
        <dbReference type="ChEBI" id="CHEBI:57936"/>
        <dbReference type="ChEBI" id="CHEBI:58349"/>
        <dbReference type="EC" id="1.2.1.38"/>
    </reaction>
</comment>
<comment type="pathway">
    <text evidence="1">Amino-acid biosynthesis; L-arginine biosynthesis; N(2)-acetyl-L-ornithine from L-glutamate: step 3/4.</text>
</comment>
<comment type="subcellular location">
    <subcellularLocation>
        <location evidence="1">Cytoplasm</location>
    </subcellularLocation>
</comment>
<comment type="similarity">
    <text evidence="1">Belongs to the NAGSA dehydrogenase family. Type 1 subfamily.</text>
</comment>
<gene>
    <name evidence="1" type="primary">argC</name>
    <name type="ordered locus">SSA_0757</name>
</gene>
<reference key="1">
    <citation type="journal article" date="2007" name="J. Bacteriol.">
        <title>Genome of the opportunistic pathogen Streptococcus sanguinis.</title>
        <authorList>
            <person name="Xu P."/>
            <person name="Alves J.M."/>
            <person name="Kitten T."/>
            <person name="Brown A."/>
            <person name="Chen Z."/>
            <person name="Ozaki L.S."/>
            <person name="Manque P."/>
            <person name="Ge X."/>
            <person name="Serrano M.G."/>
            <person name="Puiu D."/>
            <person name="Hendricks S."/>
            <person name="Wang Y."/>
            <person name="Chaplin M.D."/>
            <person name="Akan D."/>
            <person name="Paik S."/>
            <person name="Peterson D.L."/>
            <person name="Macrina F.L."/>
            <person name="Buck G.A."/>
        </authorList>
    </citation>
    <scope>NUCLEOTIDE SEQUENCE [LARGE SCALE GENOMIC DNA]</scope>
    <source>
        <strain>SK36</strain>
    </source>
</reference>
<accession>A3CLY4</accession>
<dbReference type="EC" id="1.2.1.38" evidence="1"/>
<dbReference type="EMBL" id="CP000387">
    <property type="protein sequence ID" value="ABN44189.1"/>
    <property type="molecule type" value="Genomic_DNA"/>
</dbReference>
<dbReference type="RefSeq" id="WP_011836705.1">
    <property type="nucleotide sequence ID" value="NC_009009.1"/>
</dbReference>
<dbReference type="RefSeq" id="YP_001034739.1">
    <property type="nucleotide sequence ID" value="NC_009009.1"/>
</dbReference>
<dbReference type="SMR" id="A3CLY4"/>
<dbReference type="STRING" id="388919.SSA_0757"/>
<dbReference type="KEGG" id="ssa:SSA_0757"/>
<dbReference type="PATRIC" id="fig|388919.9.peg.724"/>
<dbReference type="eggNOG" id="COG0002">
    <property type="taxonomic scope" value="Bacteria"/>
</dbReference>
<dbReference type="HOGENOM" id="CLU_006384_0_1_9"/>
<dbReference type="OrthoDB" id="9801289at2"/>
<dbReference type="UniPathway" id="UPA00068">
    <property type="reaction ID" value="UER00108"/>
</dbReference>
<dbReference type="Proteomes" id="UP000002148">
    <property type="component" value="Chromosome"/>
</dbReference>
<dbReference type="GO" id="GO:0005737">
    <property type="term" value="C:cytoplasm"/>
    <property type="evidence" value="ECO:0007669"/>
    <property type="project" value="UniProtKB-SubCell"/>
</dbReference>
<dbReference type="GO" id="GO:0003942">
    <property type="term" value="F:N-acetyl-gamma-glutamyl-phosphate reductase activity"/>
    <property type="evidence" value="ECO:0007669"/>
    <property type="project" value="UniProtKB-UniRule"/>
</dbReference>
<dbReference type="GO" id="GO:0051287">
    <property type="term" value="F:NAD binding"/>
    <property type="evidence" value="ECO:0007669"/>
    <property type="project" value="InterPro"/>
</dbReference>
<dbReference type="GO" id="GO:0070401">
    <property type="term" value="F:NADP+ binding"/>
    <property type="evidence" value="ECO:0007669"/>
    <property type="project" value="InterPro"/>
</dbReference>
<dbReference type="GO" id="GO:0006526">
    <property type="term" value="P:L-arginine biosynthetic process"/>
    <property type="evidence" value="ECO:0007669"/>
    <property type="project" value="UniProtKB-UniRule"/>
</dbReference>
<dbReference type="CDD" id="cd23934">
    <property type="entry name" value="AGPR_1_C"/>
    <property type="match status" value="1"/>
</dbReference>
<dbReference type="CDD" id="cd17895">
    <property type="entry name" value="AGPR_1_N"/>
    <property type="match status" value="1"/>
</dbReference>
<dbReference type="FunFam" id="3.30.360.10:FF:000014">
    <property type="entry name" value="N-acetyl-gamma-glutamyl-phosphate reductase"/>
    <property type="match status" value="1"/>
</dbReference>
<dbReference type="Gene3D" id="3.30.360.10">
    <property type="entry name" value="Dihydrodipicolinate Reductase, domain 2"/>
    <property type="match status" value="1"/>
</dbReference>
<dbReference type="Gene3D" id="3.40.50.720">
    <property type="entry name" value="NAD(P)-binding Rossmann-like Domain"/>
    <property type="match status" value="1"/>
</dbReference>
<dbReference type="HAMAP" id="MF_00150">
    <property type="entry name" value="ArgC_type1"/>
    <property type="match status" value="1"/>
</dbReference>
<dbReference type="InterPro" id="IPR023013">
    <property type="entry name" value="AGPR_AS"/>
</dbReference>
<dbReference type="InterPro" id="IPR000706">
    <property type="entry name" value="AGPR_type-1"/>
</dbReference>
<dbReference type="InterPro" id="IPR036291">
    <property type="entry name" value="NAD(P)-bd_dom_sf"/>
</dbReference>
<dbReference type="InterPro" id="IPR050085">
    <property type="entry name" value="NAGSA_dehydrogenase"/>
</dbReference>
<dbReference type="InterPro" id="IPR000534">
    <property type="entry name" value="Semialdehyde_DH_NAD-bd"/>
</dbReference>
<dbReference type="NCBIfam" id="TIGR01850">
    <property type="entry name" value="argC"/>
    <property type="match status" value="1"/>
</dbReference>
<dbReference type="PANTHER" id="PTHR32338:SF10">
    <property type="entry name" value="N-ACETYL-GAMMA-GLUTAMYL-PHOSPHATE REDUCTASE, CHLOROPLASTIC-RELATED"/>
    <property type="match status" value="1"/>
</dbReference>
<dbReference type="PANTHER" id="PTHR32338">
    <property type="entry name" value="N-ACETYL-GAMMA-GLUTAMYL-PHOSPHATE REDUCTASE, CHLOROPLASTIC-RELATED-RELATED"/>
    <property type="match status" value="1"/>
</dbReference>
<dbReference type="Pfam" id="PF01118">
    <property type="entry name" value="Semialdhyde_dh"/>
    <property type="match status" value="1"/>
</dbReference>
<dbReference type="Pfam" id="PF22698">
    <property type="entry name" value="Semialdhyde_dhC_1"/>
    <property type="match status" value="1"/>
</dbReference>
<dbReference type="SMART" id="SM00859">
    <property type="entry name" value="Semialdhyde_dh"/>
    <property type="match status" value="1"/>
</dbReference>
<dbReference type="SUPFAM" id="SSF55347">
    <property type="entry name" value="Glyceraldehyde-3-phosphate dehydrogenase-like, C-terminal domain"/>
    <property type="match status" value="1"/>
</dbReference>
<dbReference type="SUPFAM" id="SSF51735">
    <property type="entry name" value="NAD(P)-binding Rossmann-fold domains"/>
    <property type="match status" value="1"/>
</dbReference>
<dbReference type="PROSITE" id="PS01224">
    <property type="entry name" value="ARGC"/>
    <property type="match status" value="1"/>
</dbReference>